<reference key="1">
    <citation type="submission" date="2001-07" db="EMBL/GenBank/DDBJ databases">
        <title>Genome-wide discovery and analysis of human seven transmembrane helix receptor genes.</title>
        <authorList>
            <person name="Suwa M."/>
            <person name="Sato T."/>
            <person name="Okouchi I."/>
            <person name="Arita M."/>
            <person name="Futami K."/>
            <person name="Matsumoto S."/>
            <person name="Tsutsumi S."/>
            <person name="Aburatani H."/>
            <person name="Asai K."/>
            <person name="Akiyama Y."/>
        </authorList>
    </citation>
    <scope>NUCLEOTIDE SEQUENCE [GENOMIC DNA]</scope>
</reference>
<reference key="2">
    <citation type="journal article" date="2004" name="Nature">
        <title>DNA sequence and analysis of human chromosome 9.</title>
        <authorList>
            <person name="Humphray S.J."/>
            <person name="Oliver K."/>
            <person name="Hunt A.R."/>
            <person name="Plumb R.W."/>
            <person name="Loveland J.E."/>
            <person name="Howe K.L."/>
            <person name="Andrews T.D."/>
            <person name="Searle S."/>
            <person name="Hunt S.E."/>
            <person name="Scott C.E."/>
            <person name="Jones M.C."/>
            <person name="Ainscough R."/>
            <person name="Almeida J.P."/>
            <person name="Ambrose K.D."/>
            <person name="Ashwell R.I.S."/>
            <person name="Babbage A.K."/>
            <person name="Babbage S."/>
            <person name="Bagguley C.L."/>
            <person name="Bailey J."/>
            <person name="Banerjee R."/>
            <person name="Barker D.J."/>
            <person name="Barlow K.F."/>
            <person name="Bates K."/>
            <person name="Beasley H."/>
            <person name="Beasley O."/>
            <person name="Bird C.P."/>
            <person name="Bray-Allen S."/>
            <person name="Brown A.J."/>
            <person name="Brown J.Y."/>
            <person name="Burford D."/>
            <person name="Burrill W."/>
            <person name="Burton J."/>
            <person name="Carder C."/>
            <person name="Carter N.P."/>
            <person name="Chapman J.C."/>
            <person name="Chen Y."/>
            <person name="Clarke G."/>
            <person name="Clark S.Y."/>
            <person name="Clee C.M."/>
            <person name="Clegg S."/>
            <person name="Collier R.E."/>
            <person name="Corby N."/>
            <person name="Crosier M."/>
            <person name="Cummings A.T."/>
            <person name="Davies J."/>
            <person name="Dhami P."/>
            <person name="Dunn M."/>
            <person name="Dutta I."/>
            <person name="Dyer L.W."/>
            <person name="Earthrowl M.E."/>
            <person name="Faulkner L."/>
            <person name="Fleming C.J."/>
            <person name="Frankish A."/>
            <person name="Frankland J.A."/>
            <person name="French L."/>
            <person name="Fricker D.G."/>
            <person name="Garner P."/>
            <person name="Garnett J."/>
            <person name="Ghori J."/>
            <person name="Gilbert J.G.R."/>
            <person name="Glison C."/>
            <person name="Grafham D.V."/>
            <person name="Gribble S."/>
            <person name="Griffiths C."/>
            <person name="Griffiths-Jones S."/>
            <person name="Grocock R."/>
            <person name="Guy J."/>
            <person name="Hall R.E."/>
            <person name="Hammond S."/>
            <person name="Harley J.L."/>
            <person name="Harrison E.S.I."/>
            <person name="Hart E.A."/>
            <person name="Heath P.D."/>
            <person name="Henderson C.D."/>
            <person name="Hopkins B.L."/>
            <person name="Howard P.J."/>
            <person name="Howden P.J."/>
            <person name="Huckle E."/>
            <person name="Johnson C."/>
            <person name="Johnson D."/>
            <person name="Joy A.A."/>
            <person name="Kay M."/>
            <person name="Keenan S."/>
            <person name="Kershaw J.K."/>
            <person name="Kimberley A.M."/>
            <person name="King A."/>
            <person name="Knights A."/>
            <person name="Laird G.K."/>
            <person name="Langford C."/>
            <person name="Lawlor S."/>
            <person name="Leongamornlert D.A."/>
            <person name="Leversha M."/>
            <person name="Lloyd C."/>
            <person name="Lloyd D.M."/>
            <person name="Lovell J."/>
            <person name="Martin S."/>
            <person name="Mashreghi-Mohammadi M."/>
            <person name="Matthews L."/>
            <person name="McLaren S."/>
            <person name="McLay K.E."/>
            <person name="McMurray A."/>
            <person name="Milne S."/>
            <person name="Nickerson T."/>
            <person name="Nisbett J."/>
            <person name="Nordsiek G."/>
            <person name="Pearce A.V."/>
            <person name="Peck A.I."/>
            <person name="Porter K.M."/>
            <person name="Pandian R."/>
            <person name="Pelan S."/>
            <person name="Phillimore B."/>
            <person name="Povey S."/>
            <person name="Ramsey Y."/>
            <person name="Rand V."/>
            <person name="Scharfe M."/>
            <person name="Sehra H.K."/>
            <person name="Shownkeen R."/>
            <person name="Sims S.K."/>
            <person name="Skuce C.D."/>
            <person name="Smith M."/>
            <person name="Steward C.A."/>
            <person name="Swarbreck D."/>
            <person name="Sycamore N."/>
            <person name="Tester J."/>
            <person name="Thorpe A."/>
            <person name="Tracey A."/>
            <person name="Tromans A."/>
            <person name="Thomas D.W."/>
            <person name="Wall M."/>
            <person name="Wallis J.M."/>
            <person name="West A.P."/>
            <person name="Whitehead S.L."/>
            <person name="Willey D.L."/>
            <person name="Williams S.A."/>
            <person name="Wilming L."/>
            <person name="Wray P.W."/>
            <person name="Young L."/>
            <person name="Ashurst J.L."/>
            <person name="Coulson A."/>
            <person name="Blocker H."/>
            <person name="Durbin R.M."/>
            <person name="Sulston J.E."/>
            <person name="Hubbard T."/>
            <person name="Jackson M.J."/>
            <person name="Bentley D.R."/>
            <person name="Beck S."/>
            <person name="Rogers J."/>
            <person name="Dunham I."/>
        </authorList>
    </citation>
    <scope>NUCLEOTIDE SEQUENCE [LARGE SCALE GENOMIC DNA]</scope>
</reference>
<organism>
    <name type="scientific">Homo sapiens</name>
    <name type="common">Human</name>
    <dbReference type="NCBI Taxonomy" id="9606"/>
    <lineage>
        <taxon>Eukaryota</taxon>
        <taxon>Metazoa</taxon>
        <taxon>Chordata</taxon>
        <taxon>Craniata</taxon>
        <taxon>Vertebrata</taxon>
        <taxon>Euteleostomi</taxon>
        <taxon>Mammalia</taxon>
        <taxon>Eutheria</taxon>
        <taxon>Euarchontoglires</taxon>
        <taxon>Primates</taxon>
        <taxon>Haplorrhini</taxon>
        <taxon>Catarrhini</taxon>
        <taxon>Hominidae</taxon>
        <taxon>Homo</taxon>
    </lineage>
</organism>
<feature type="chain" id="PRO_0000345416" description="Putative olfactory receptor 13C6">
    <location>
        <begin position="1"/>
        <end position="151"/>
    </location>
</feature>
<feature type="topological domain" description="Extracellular" evidence="1">
    <location>
        <begin position="1"/>
        <end position="27"/>
    </location>
</feature>
<feature type="transmembrane region" description="Helical; Name=1" evidence="1">
    <location>
        <begin position="28"/>
        <end position="48"/>
    </location>
</feature>
<feature type="topological domain" description="Cytoplasmic" evidence="1">
    <location>
        <begin position="49"/>
        <end position="61"/>
    </location>
</feature>
<feature type="transmembrane region" description="Helical; Name=2" evidence="1">
    <location>
        <begin position="62"/>
        <end position="82"/>
    </location>
</feature>
<feature type="topological domain" description="Extracellular" evidence="1">
    <location>
        <begin position="83"/>
        <end position="100"/>
    </location>
</feature>
<feature type="transmembrane region" description="Helical; Name=3" evidence="1">
    <location>
        <begin position="101"/>
        <end position="121"/>
    </location>
</feature>
<feature type="glycosylation site" description="N-linked (GlcNAc...) asparagine" evidence="1">
    <location>
        <position position="5"/>
    </location>
</feature>
<feature type="sequence conflict" description="In Ref. 1; BAC05742." evidence="3" ref="1">
    <original>A</original>
    <variation>AS</variation>
    <location>
        <position position="97"/>
    </location>
</feature>
<feature type="sequence conflict" description="In Ref. 1; BAC05742." evidence="3" ref="1">
    <original>F</original>
    <variation>L</variation>
    <location>
        <position position="106"/>
    </location>
</feature>
<accession>Q8NH95</accession>
<keyword id="KW-1003">Cell membrane</keyword>
<keyword id="KW-0297">G-protein coupled receptor</keyword>
<keyword id="KW-0325">Glycoprotein</keyword>
<keyword id="KW-0472">Membrane</keyword>
<keyword id="KW-0552">Olfaction</keyword>
<keyword id="KW-0675">Receptor</keyword>
<keyword id="KW-1185">Reference proteome</keyword>
<keyword id="KW-0716">Sensory transduction</keyword>
<keyword id="KW-0807">Transducer</keyword>
<keyword id="KW-0812">Transmembrane</keyword>
<keyword id="KW-1133">Transmembrane helix</keyword>
<comment type="function">
    <text evidence="3">Odorant receptor.</text>
</comment>
<comment type="subcellular location">
    <subcellularLocation>
        <location>Cell membrane</location>
        <topology>Multi-pass membrane protein</topology>
    </subcellularLocation>
</comment>
<comment type="similarity">
    <text evidence="2">Belongs to the G-protein coupled receptor 1 family.</text>
</comment>
<comment type="caution">
    <text evidence="3">Could be the product of a pseudogene. Polymorphic pseudogene or segregating pseudogene, a deletion of 2 bp code for a longer protein which is conserved in other mammals and potentially functional.</text>
</comment>
<comment type="sequence caution" evidence="3">
    <conflict type="miscellaneous discrepancy">
        <sequence resource="EMBL-CDS" id="BAC05742"/>
    </conflict>
    <text>Several sequencing errors.</text>
</comment>
<comment type="online information" name="Human Olfactory Receptor Data Exploratorium (HORDE)">
    <link uri="http://genome.weizmann.ac.il/horde/card/index/symbol:OR13C7P"/>
</comment>
<dbReference type="EMBL" id="AB065490">
    <property type="protein sequence ID" value="BAC05742.1"/>
    <property type="status" value="ALT_SEQ"/>
    <property type="molecule type" value="Genomic_DNA"/>
</dbReference>
<dbReference type="EMBL" id="AL138834">
    <property type="status" value="NOT_ANNOTATED_CDS"/>
    <property type="molecule type" value="Genomic_DNA"/>
</dbReference>
<dbReference type="SMR" id="Q8NH95"/>
<dbReference type="FunCoup" id="Q8NH95">
    <property type="interactions" value="4"/>
</dbReference>
<dbReference type="GlyCosmos" id="Q8NH95">
    <property type="glycosylation" value="1 site, No reported glycans"/>
</dbReference>
<dbReference type="GlyGen" id="Q8NH95">
    <property type="glycosylation" value="1 site"/>
</dbReference>
<dbReference type="BioMuta" id="HGNC:15101"/>
<dbReference type="DMDM" id="74760329"/>
<dbReference type="AGR" id="HGNC:15101"/>
<dbReference type="GeneCards" id="OR13C6P"/>
<dbReference type="HGNC" id="HGNC:15101">
    <property type="gene designation" value="OR13C6P"/>
</dbReference>
<dbReference type="neXtProt" id="NX_Q8NH95"/>
<dbReference type="InParanoid" id="Q8NH95"/>
<dbReference type="PAN-GO" id="Q8NH95">
    <property type="GO annotations" value="0 GO annotations based on evolutionary models"/>
</dbReference>
<dbReference type="Pharos" id="Q8NH95">
    <property type="development level" value="Tdark"/>
</dbReference>
<dbReference type="Proteomes" id="UP000005640">
    <property type="component" value="Unplaced"/>
</dbReference>
<dbReference type="RNAct" id="Q8NH95">
    <property type="molecule type" value="protein"/>
</dbReference>
<dbReference type="GO" id="GO:0005886">
    <property type="term" value="C:plasma membrane"/>
    <property type="evidence" value="ECO:0000318"/>
    <property type="project" value="GO_Central"/>
</dbReference>
<dbReference type="GO" id="GO:0004930">
    <property type="term" value="F:G protein-coupled receptor activity"/>
    <property type="evidence" value="ECO:0007669"/>
    <property type="project" value="UniProtKB-KW"/>
</dbReference>
<dbReference type="GO" id="GO:0004984">
    <property type="term" value="F:olfactory receptor activity"/>
    <property type="evidence" value="ECO:0000318"/>
    <property type="project" value="GO_Central"/>
</dbReference>
<dbReference type="GO" id="GO:0050911">
    <property type="term" value="P:detection of chemical stimulus involved in sensory perception of smell"/>
    <property type="evidence" value="ECO:0000318"/>
    <property type="project" value="GO_Central"/>
</dbReference>
<dbReference type="FunFam" id="1.20.1070.10:FF:000410">
    <property type="entry name" value="Olfactory receptor 1348"/>
    <property type="match status" value="1"/>
</dbReference>
<dbReference type="Gene3D" id="1.20.1070.10">
    <property type="entry name" value="Rhodopsin 7-helix transmembrane proteins"/>
    <property type="match status" value="1"/>
</dbReference>
<dbReference type="InterPro" id="IPR000276">
    <property type="entry name" value="GPCR_Rhodpsn"/>
</dbReference>
<dbReference type="InterPro" id="IPR017452">
    <property type="entry name" value="GPCR_Rhodpsn_7TM"/>
</dbReference>
<dbReference type="InterPro" id="IPR000725">
    <property type="entry name" value="Olfact_rcpt"/>
</dbReference>
<dbReference type="PANTHER" id="PTHR26453">
    <property type="entry name" value="OLFACTORY RECEPTOR"/>
    <property type="match status" value="1"/>
</dbReference>
<dbReference type="Pfam" id="PF13853">
    <property type="entry name" value="7tm_4"/>
    <property type="match status" value="1"/>
</dbReference>
<dbReference type="PRINTS" id="PR00237">
    <property type="entry name" value="GPCRRHODOPSN"/>
</dbReference>
<dbReference type="SUPFAM" id="SSF81321">
    <property type="entry name" value="Family A G protein-coupled receptor-like"/>
    <property type="match status" value="1"/>
</dbReference>
<dbReference type="PROSITE" id="PS00237">
    <property type="entry name" value="G_PROTEIN_RECEP_F1_1"/>
    <property type="match status" value="1"/>
</dbReference>
<dbReference type="PROSITE" id="PS50262">
    <property type="entry name" value="G_PROTEIN_RECEP_F1_2"/>
    <property type="match status" value="1"/>
</dbReference>
<evidence type="ECO:0000255" key="1"/>
<evidence type="ECO:0000255" key="2">
    <source>
        <dbReference type="PROSITE-ProRule" id="PRU00521"/>
    </source>
</evidence>
<evidence type="ECO:0000305" key="3"/>
<evidence type="ECO:0000312" key="4">
    <source>
        <dbReference type="HGNC" id="HGNC:15101"/>
    </source>
</evidence>
<proteinExistence type="uncertain"/>
<name>O13C6_HUMAN</name>
<gene>
    <name evidence="4" type="primary">OR13C6P</name>
</gene>
<protein>
    <recommendedName>
        <fullName evidence="3">Putative olfactory receptor 13C6</fullName>
    </recommendedName>
    <alternativeName>
        <fullName evidence="4">Olfactory receptor, family 13, subfamily C, member 6 pseudogene</fullName>
    </alternativeName>
    <alternativeName>
        <fullName evidence="4">Olfactory receptor, family 13, subfamily C, member 7 pseudogene</fullName>
    </alternativeName>
    <alternativeName>
        <fullName evidence="3">Putative olfactory receptor 13C7</fullName>
    </alternativeName>
</protein>
<sequence>MVSANQTASVTEFILLGLSAHPKLEKTFFVLILLMYLVILLGNGVLILMTVSNSHLHMPMYFFLGNLSFLDICYTTSSVPLILDSFLTPRKTISFSACAVQMFLSFAMGATECVLLSMMAFDRYVAICNPLRYPVVMSKAAYMPIRLPAPG</sequence>